<reference key="1">
    <citation type="journal article" date="2008" name="J. Bacteriol.">
        <title>The complete genome sequence of Thermococcus onnurineus NA1 reveals a mixed heterotrophic and carboxydotrophic metabolism.</title>
        <authorList>
            <person name="Lee H.S."/>
            <person name="Kang S.G."/>
            <person name="Bae S.S."/>
            <person name="Lim J.K."/>
            <person name="Cho Y."/>
            <person name="Kim Y.J."/>
            <person name="Jeon J.H."/>
            <person name="Cha S.-S."/>
            <person name="Kwon K.K."/>
            <person name="Kim H.-T."/>
            <person name="Park C.-J."/>
            <person name="Lee H.-W."/>
            <person name="Kim S.I."/>
            <person name="Chun J."/>
            <person name="Colwell R.R."/>
            <person name="Kim S.-J."/>
            <person name="Lee J.-H."/>
        </authorList>
    </citation>
    <scope>NUCLEOTIDE SEQUENCE [LARGE SCALE GENOMIC DNA]</scope>
    <source>
        <strain>NA1</strain>
    </source>
</reference>
<keyword id="KW-0963">Cytoplasm</keyword>
<keyword id="KW-0251">Elongation factor</keyword>
<keyword id="KW-0342">GTP-binding</keyword>
<keyword id="KW-0547">Nucleotide-binding</keyword>
<keyword id="KW-0648">Protein biosynthesis</keyword>
<gene>
    <name evidence="1" type="primary">fusA</name>
    <name type="ordered locus">TON_0755</name>
</gene>
<comment type="function">
    <text evidence="1">Catalyzes the GTP-dependent ribosomal translocation step during translation elongation. During this step, the ribosome changes from the pre-translocational (PRE) to the post-translocational (POST) state as the newly formed A-site-bound peptidyl-tRNA and P-site-bound deacylated tRNA move to the P and E sites, respectively. Catalyzes the coordinated movement of the two tRNA molecules, the mRNA and conformational changes in the ribosome.</text>
</comment>
<comment type="subcellular location">
    <subcellularLocation>
        <location evidence="1">Cytoplasm</location>
    </subcellularLocation>
</comment>
<comment type="similarity">
    <text evidence="1">Belongs to the TRAFAC class translation factor GTPase superfamily. Classic translation factor GTPase family. EF-G/EF-2 subfamily.</text>
</comment>
<organism>
    <name type="scientific">Thermococcus onnurineus (strain NA1)</name>
    <dbReference type="NCBI Taxonomy" id="523850"/>
    <lineage>
        <taxon>Archaea</taxon>
        <taxon>Methanobacteriati</taxon>
        <taxon>Methanobacteriota</taxon>
        <taxon>Thermococci</taxon>
        <taxon>Thermococcales</taxon>
        <taxon>Thermococcaceae</taxon>
        <taxon>Thermococcus</taxon>
    </lineage>
</organism>
<feature type="chain" id="PRO_1000091773" description="Elongation factor 2">
    <location>
        <begin position="1"/>
        <end position="732"/>
    </location>
</feature>
<feature type="domain" description="tr-type G">
    <location>
        <begin position="19"/>
        <end position="260"/>
    </location>
</feature>
<feature type="binding site" evidence="1">
    <location>
        <begin position="28"/>
        <end position="35"/>
    </location>
    <ligand>
        <name>GTP</name>
        <dbReference type="ChEBI" id="CHEBI:37565"/>
    </ligand>
</feature>
<feature type="binding site" evidence="1">
    <location>
        <begin position="94"/>
        <end position="98"/>
    </location>
    <ligand>
        <name>GTP</name>
        <dbReference type="ChEBI" id="CHEBI:37565"/>
    </ligand>
</feature>
<feature type="binding site" evidence="1">
    <location>
        <begin position="148"/>
        <end position="151"/>
    </location>
    <ligand>
        <name>GTP</name>
        <dbReference type="ChEBI" id="CHEBI:37565"/>
    </ligand>
</feature>
<feature type="modified residue" description="Diphthamide" evidence="1">
    <location>
        <position position="597"/>
    </location>
</feature>
<evidence type="ECO:0000255" key="1">
    <source>
        <dbReference type="HAMAP-Rule" id="MF_00054"/>
    </source>
</evidence>
<accession>B6YVG5</accession>
<protein>
    <recommendedName>
        <fullName evidence="1">Elongation factor 2</fullName>
        <shortName evidence="1">EF-2</shortName>
    </recommendedName>
</protein>
<name>EF2_THEON</name>
<sequence>MGRREEMIAKIKELMTQPERIRNMGIAAHIDHGKTTLSDNLLAGAGMISEELAGKQLVLDFDEQEQARGITINAANVSMVHTYEGKEYLINLIDTPGHVDFGGDVTRAMRAIDGAIIVVDAVEGVMPQTETVLRQALREYVKPVLFINKVDRLIKELKLGPNEILNRFAKIITDVNRLIKRYAPEEFKNQWLVKVEDGSVAFGSAYYNWALSVPYMKRTGVTFKDIVELTNAGDLKTLRQKAPLHVVVLDMVVRHLPNPLEAQKYRIPHLWRGDINSDVGQAMINCDPKGKMVMVVTKIILDKHAGEVATGRVWSGTVKTGQEVYLINSKRKARIQQVGIYMGPERVNMEAVQAGNIVAVTGLRDAMAGETVSVEQIEPFEALHYTSEPVVTVAIEAKNVKDLPKLIEALRQLAKEDPTLHVKIDEETGQHLLSGMGELHLEVKLYRLKTEWKLDVDVSPPIVVYRESVTKQSPIVEGKSPNKHNRFYITVEPLPDAIYEAIREGEIPEGRPKDPKAVAKKLAELGLDYEIAKGIVDVYNGNIFLDNTKGIQYLNEVMDLLVDGFHQAMDEGPLAKEPVMKVMVRLHDAKIHEDNVHRGPAQIYPAIRTAIHCAMMKAGPVLYEPYQKVIINIPYEYMGSVSREINQRRGQLIDMRQEGEVMIIISEAPVAEMFGFAGALRGATSGKALWSTEHAGFKRVPNELAVNIIRQIRQRKGLDPNPPKEQDVCPQQ</sequence>
<dbReference type="EMBL" id="CP000855">
    <property type="protein sequence ID" value="ACJ16243.1"/>
    <property type="molecule type" value="Genomic_DNA"/>
</dbReference>
<dbReference type="RefSeq" id="WP_012571715.1">
    <property type="nucleotide sequence ID" value="NC_011529.1"/>
</dbReference>
<dbReference type="SMR" id="B6YVG5"/>
<dbReference type="STRING" id="523850.TON_0755"/>
<dbReference type="GeneID" id="7017058"/>
<dbReference type="KEGG" id="ton:TON_0755"/>
<dbReference type="PATRIC" id="fig|523850.10.peg.759"/>
<dbReference type="eggNOG" id="arCOG01559">
    <property type="taxonomic scope" value="Archaea"/>
</dbReference>
<dbReference type="HOGENOM" id="CLU_002794_11_1_2"/>
<dbReference type="OrthoDB" id="6290at2157"/>
<dbReference type="Proteomes" id="UP000002727">
    <property type="component" value="Chromosome"/>
</dbReference>
<dbReference type="GO" id="GO:0005829">
    <property type="term" value="C:cytosol"/>
    <property type="evidence" value="ECO:0007669"/>
    <property type="project" value="TreeGrafter"/>
</dbReference>
<dbReference type="GO" id="GO:1990904">
    <property type="term" value="C:ribonucleoprotein complex"/>
    <property type="evidence" value="ECO:0007669"/>
    <property type="project" value="TreeGrafter"/>
</dbReference>
<dbReference type="GO" id="GO:0005525">
    <property type="term" value="F:GTP binding"/>
    <property type="evidence" value="ECO:0007669"/>
    <property type="project" value="UniProtKB-UniRule"/>
</dbReference>
<dbReference type="GO" id="GO:0003924">
    <property type="term" value="F:GTPase activity"/>
    <property type="evidence" value="ECO:0007669"/>
    <property type="project" value="InterPro"/>
</dbReference>
<dbReference type="GO" id="GO:0003746">
    <property type="term" value="F:translation elongation factor activity"/>
    <property type="evidence" value="ECO:0007669"/>
    <property type="project" value="UniProtKB-UniRule"/>
</dbReference>
<dbReference type="CDD" id="cd01681">
    <property type="entry name" value="aeEF2_snRNP_like_IV"/>
    <property type="match status" value="1"/>
</dbReference>
<dbReference type="CDD" id="cd01885">
    <property type="entry name" value="EF2"/>
    <property type="match status" value="1"/>
</dbReference>
<dbReference type="CDD" id="cd16268">
    <property type="entry name" value="EF2_II"/>
    <property type="match status" value="1"/>
</dbReference>
<dbReference type="CDD" id="cd16261">
    <property type="entry name" value="EF2_snRNP_III"/>
    <property type="match status" value="1"/>
</dbReference>
<dbReference type="CDD" id="cd01514">
    <property type="entry name" value="Elongation_Factor_C"/>
    <property type="match status" value="1"/>
</dbReference>
<dbReference type="FunFam" id="3.30.230.10:FF:000009">
    <property type="entry name" value="116 kDa U5 small nuclear ribonucleoprotein component"/>
    <property type="match status" value="1"/>
</dbReference>
<dbReference type="FunFam" id="2.40.30.10:FF:000110">
    <property type="entry name" value="Elongation factor 2"/>
    <property type="match status" value="1"/>
</dbReference>
<dbReference type="FunFam" id="3.30.70.240:FF:000010">
    <property type="entry name" value="Elongation factor 2"/>
    <property type="match status" value="1"/>
</dbReference>
<dbReference type="FunFam" id="3.40.50.300:FF:000684">
    <property type="entry name" value="Elongation factor 2"/>
    <property type="match status" value="1"/>
</dbReference>
<dbReference type="FunFam" id="3.30.70.870:FF:000002">
    <property type="entry name" value="Translation elongation factor 2"/>
    <property type="match status" value="1"/>
</dbReference>
<dbReference type="Gene3D" id="3.30.230.10">
    <property type="match status" value="1"/>
</dbReference>
<dbReference type="Gene3D" id="3.30.70.240">
    <property type="match status" value="1"/>
</dbReference>
<dbReference type="Gene3D" id="3.30.70.870">
    <property type="entry name" value="Elongation Factor G (Translational Gtpase), domain 3"/>
    <property type="match status" value="1"/>
</dbReference>
<dbReference type="Gene3D" id="3.40.50.300">
    <property type="entry name" value="P-loop containing nucleotide triphosphate hydrolases"/>
    <property type="match status" value="1"/>
</dbReference>
<dbReference type="Gene3D" id="2.40.30.10">
    <property type="entry name" value="Translation factors"/>
    <property type="match status" value="1"/>
</dbReference>
<dbReference type="HAMAP" id="MF_00054_A">
    <property type="entry name" value="EF_G_EF_2_A"/>
    <property type="match status" value="1"/>
</dbReference>
<dbReference type="InterPro" id="IPR041095">
    <property type="entry name" value="EFG_II"/>
</dbReference>
<dbReference type="InterPro" id="IPR035647">
    <property type="entry name" value="EFG_III/V"/>
</dbReference>
<dbReference type="InterPro" id="IPR000640">
    <property type="entry name" value="EFG_V-like"/>
</dbReference>
<dbReference type="InterPro" id="IPR004161">
    <property type="entry name" value="EFTu-like_2"/>
</dbReference>
<dbReference type="InterPro" id="IPR031157">
    <property type="entry name" value="G_TR_CS"/>
</dbReference>
<dbReference type="InterPro" id="IPR027417">
    <property type="entry name" value="P-loop_NTPase"/>
</dbReference>
<dbReference type="InterPro" id="IPR020568">
    <property type="entry name" value="Ribosomal_Su5_D2-typ_SF"/>
</dbReference>
<dbReference type="InterPro" id="IPR014721">
    <property type="entry name" value="Ribsml_uS5_D2-typ_fold_subgr"/>
</dbReference>
<dbReference type="InterPro" id="IPR005225">
    <property type="entry name" value="Small_GTP-bd"/>
</dbReference>
<dbReference type="InterPro" id="IPR000795">
    <property type="entry name" value="T_Tr_GTP-bd_dom"/>
</dbReference>
<dbReference type="InterPro" id="IPR009000">
    <property type="entry name" value="Transl_B-barrel_sf"/>
</dbReference>
<dbReference type="InterPro" id="IPR004543">
    <property type="entry name" value="Transl_elong_EFG/EF2_arc"/>
</dbReference>
<dbReference type="InterPro" id="IPR005517">
    <property type="entry name" value="Transl_elong_EFG/EF2_IV"/>
</dbReference>
<dbReference type="NCBIfam" id="TIGR00490">
    <property type="entry name" value="aEF-2"/>
    <property type="match status" value="1"/>
</dbReference>
<dbReference type="NCBIfam" id="TIGR00231">
    <property type="entry name" value="small_GTP"/>
    <property type="match status" value="1"/>
</dbReference>
<dbReference type="PANTHER" id="PTHR42908:SF3">
    <property type="entry name" value="ELONGATION FACTOR-LIKE GTPASE 1"/>
    <property type="match status" value="1"/>
</dbReference>
<dbReference type="PANTHER" id="PTHR42908">
    <property type="entry name" value="TRANSLATION ELONGATION FACTOR-RELATED"/>
    <property type="match status" value="1"/>
</dbReference>
<dbReference type="Pfam" id="PF00679">
    <property type="entry name" value="EFG_C"/>
    <property type="match status" value="1"/>
</dbReference>
<dbReference type="Pfam" id="PF14492">
    <property type="entry name" value="EFG_III"/>
    <property type="match status" value="1"/>
</dbReference>
<dbReference type="Pfam" id="PF03764">
    <property type="entry name" value="EFG_IV"/>
    <property type="match status" value="1"/>
</dbReference>
<dbReference type="Pfam" id="PF00009">
    <property type="entry name" value="GTP_EFTU"/>
    <property type="match status" value="1"/>
</dbReference>
<dbReference type="Pfam" id="PF03144">
    <property type="entry name" value="GTP_EFTU_D2"/>
    <property type="match status" value="1"/>
</dbReference>
<dbReference type="PRINTS" id="PR00315">
    <property type="entry name" value="ELONGATNFCT"/>
</dbReference>
<dbReference type="SMART" id="SM00838">
    <property type="entry name" value="EFG_C"/>
    <property type="match status" value="1"/>
</dbReference>
<dbReference type="SMART" id="SM00889">
    <property type="entry name" value="EFG_IV"/>
    <property type="match status" value="1"/>
</dbReference>
<dbReference type="SUPFAM" id="SSF54980">
    <property type="entry name" value="EF-G C-terminal domain-like"/>
    <property type="match status" value="2"/>
</dbReference>
<dbReference type="SUPFAM" id="SSF52540">
    <property type="entry name" value="P-loop containing nucleoside triphosphate hydrolases"/>
    <property type="match status" value="1"/>
</dbReference>
<dbReference type="SUPFAM" id="SSF54211">
    <property type="entry name" value="Ribosomal protein S5 domain 2-like"/>
    <property type="match status" value="1"/>
</dbReference>
<dbReference type="SUPFAM" id="SSF50447">
    <property type="entry name" value="Translation proteins"/>
    <property type="match status" value="1"/>
</dbReference>
<dbReference type="PROSITE" id="PS00301">
    <property type="entry name" value="G_TR_1"/>
    <property type="match status" value="1"/>
</dbReference>
<dbReference type="PROSITE" id="PS51722">
    <property type="entry name" value="G_TR_2"/>
    <property type="match status" value="1"/>
</dbReference>
<proteinExistence type="inferred from homology"/>